<accession>Q1DCA3</accession>
<reference key="1">
    <citation type="journal article" date="2006" name="Proc. Natl. Acad. Sci. U.S.A.">
        <title>Evolution of sensory complexity recorded in a myxobacterial genome.</title>
        <authorList>
            <person name="Goldman B.S."/>
            <person name="Nierman W.C."/>
            <person name="Kaiser D."/>
            <person name="Slater S.C."/>
            <person name="Durkin A.S."/>
            <person name="Eisen J.A."/>
            <person name="Ronning C.M."/>
            <person name="Barbazuk W.B."/>
            <person name="Blanchard M."/>
            <person name="Field C."/>
            <person name="Halling C."/>
            <person name="Hinkle G."/>
            <person name="Iartchuk O."/>
            <person name="Kim H.S."/>
            <person name="Mackenzie C."/>
            <person name="Madupu R."/>
            <person name="Miller N."/>
            <person name="Shvartsbeyn A."/>
            <person name="Sullivan S.A."/>
            <person name="Vaudin M."/>
            <person name="Wiegand R."/>
            <person name="Kaplan H.B."/>
        </authorList>
    </citation>
    <scope>NUCLEOTIDE SEQUENCE [LARGE SCALE GENOMIC DNA]</scope>
    <source>
        <strain>DK1622</strain>
    </source>
</reference>
<evidence type="ECO:0000255" key="1">
    <source>
        <dbReference type="HAMAP-Rule" id="MF_00120"/>
    </source>
</evidence>
<sequence>MQLTDLTMLELAAKLAAGEASSEEATRASLARIQQVDPKVRAFLRVDEAGALAAARASDARRKSGSPASALDGVPLGLKDIFLTEGVETTAGSRILEGFVPPYDATVVRLLKEAGLPLVGKLNMDEFAMGSSNESSAFFPSHNPWDVSRTPGGSSGGSAAAVAAREVFGALGTDTGGSIRQPAALTNTVGLKPTYGRVSRFGVIAFASSLDQPGPMTRTVADAAALLQVIARPDAQDATSADAPVPDYSADLEAGVRGLKLGVPREYFTEGMDPEVEAAVREALREYERLGATLVDVSLPHTKYALATYYLIAPAEASSNLARYDGVRFGLRAKDARSLRDVYALTREQGFGAEVKRRIMLGTFALSSGYYDAHYLRAQKVRTLIREDFTRAFQQVDALLSPTSPVPAFKLGEKVEDPLSMYLMDIYTLPCNLAGLPGLSVPCGFTKAGLPVGLQILGRPFDEAGLLRIARAYEREHDFFRRSAPL</sequence>
<name>GATA_MYXXD</name>
<keyword id="KW-0067">ATP-binding</keyword>
<keyword id="KW-0436">Ligase</keyword>
<keyword id="KW-0547">Nucleotide-binding</keyword>
<keyword id="KW-0648">Protein biosynthesis</keyword>
<keyword id="KW-1185">Reference proteome</keyword>
<comment type="function">
    <text evidence="1">Allows the formation of correctly charged Gln-tRNA(Gln) through the transamidation of misacylated Glu-tRNA(Gln) in organisms which lack glutaminyl-tRNA synthetase. The reaction takes place in the presence of glutamine and ATP through an activated gamma-phospho-Glu-tRNA(Gln).</text>
</comment>
<comment type="catalytic activity">
    <reaction evidence="1">
        <text>L-glutamyl-tRNA(Gln) + L-glutamine + ATP + H2O = L-glutaminyl-tRNA(Gln) + L-glutamate + ADP + phosphate + H(+)</text>
        <dbReference type="Rhea" id="RHEA:17521"/>
        <dbReference type="Rhea" id="RHEA-COMP:9681"/>
        <dbReference type="Rhea" id="RHEA-COMP:9684"/>
        <dbReference type="ChEBI" id="CHEBI:15377"/>
        <dbReference type="ChEBI" id="CHEBI:15378"/>
        <dbReference type="ChEBI" id="CHEBI:29985"/>
        <dbReference type="ChEBI" id="CHEBI:30616"/>
        <dbReference type="ChEBI" id="CHEBI:43474"/>
        <dbReference type="ChEBI" id="CHEBI:58359"/>
        <dbReference type="ChEBI" id="CHEBI:78520"/>
        <dbReference type="ChEBI" id="CHEBI:78521"/>
        <dbReference type="ChEBI" id="CHEBI:456216"/>
        <dbReference type="EC" id="6.3.5.7"/>
    </reaction>
</comment>
<comment type="subunit">
    <text evidence="1">Heterotrimer of A, B and C subunits.</text>
</comment>
<comment type="similarity">
    <text evidence="1">Belongs to the amidase family. GatA subfamily.</text>
</comment>
<proteinExistence type="inferred from homology"/>
<organism>
    <name type="scientific">Myxococcus xanthus (strain DK1622)</name>
    <dbReference type="NCBI Taxonomy" id="246197"/>
    <lineage>
        <taxon>Bacteria</taxon>
        <taxon>Pseudomonadati</taxon>
        <taxon>Myxococcota</taxon>
        <taxon>Myxococcia</taxon>
        <taxon>Myxococcales</taxon>
        <taxon>Cystobacterineae</taxon>
        <taxon>Myxococcaceae</taxon>
        <taxon>Myxococcus</taxon>
    </lineage>
</organism>
<gene>
    <name evidence="1" type="primary">gatA</name>
    <name type="ordered locus">MXAN_1463</name>
</gene>
<dbReference type="EC" id="6.3.5.7" evidence="1"/>
<dbReference type="EMBL" id="CP000113">
    <property type="protein sequence ID" value="ABF88627.1"/>
    <property type="molecule type" value="Genomic_DNA"/>
</dbReference>
<dbReference type="RefSeq" id="WP_011551579.1">
    <property type="nucleotide sequence ID" value="NC_008095.1"/>
</dbReference>
<dbReference type="SMR" id="Q1DCA3"/>
<dbReference type="STRING" id="246197.MXAN_1463"/>
<dbReference type="EnsemblBacteria" id="ABF88627">
    <property type="protein sequence ID" value="ABF88627"/>
    <property type="gene ID" value="MXAN_1463"/>
</dbReference>
<dbReference type="GeneID" id="41358909"/>
<dbReference type="KEGG" id="mxa:MXAN_1463"/>
<dbReference type="eggNOG" id="COG0154">
    <property type="taxonomic scope" value="Bacteria"/>
</dbReference>
<dbReference type="HOGENOM" id="CLU_009600_0_3_7"/>
<dbReference type="OrthoDB" id="9811471at2"/>
<dbReference type="Proteomes" id="UP000002402">
    <property type="component" value="Chromosome"/>
</dbReference>
<dbReference type="GO" id="GO:0030956">
    <property type="term" value="C:glutamyl-tRNA(Gln) amidotransferase complex"/>
    <property type="evidence" value="ECO:0007669"/>
    <property type="project" value="InterPro"/>
</dbReference>
<dbReference type="GO" id="GO:0005524">
    <property type="term" value="F:ATP binding"/>
    <property type="evidence" value="ECO:0007669"/>
    <property type="project" value="UniProtKB-KW"/>
</dbReference>
<dbReference type="GO" id="GO:0050567">
    <property type="term" value="F:glutaminyl-tRNA synthase (glutamine-hydrolyzing) activity"/>
    <property type="evidence" value="ECO:0007669"/>
    <property type="project" value="UniProtKB-UniRule"/>
</dbReference>
<dbReference type="GO" id="GO:0006412">
    <property type="term" value="P:translation"/>
    <property type="evidence" value="ECO:0007669"/>
    <property type="project" value="UniProtKB-UniRule"/>
</dbReference>
<dbReference type="Gene3D" id="3.90.1300.10">
    <property type="entry name" value="Amidase signature (AS) domain"/>
    <property type="match status" value="1"/>
</dbReference>
<dbReference type="HAMAP" id="MF_00120">
    <property type="entry name" value="GatA"/>
    <property type="match status" value="1"/>
</dbReference>
<dbReference type="InterPro" id="IPR000120">
    <property type="entry name" value="Amidase"/>
</dbReference>
<dbReference type="InterPro" id="IPR020556">
    <property type="entry name" value="Amidase_CS"/>
</dbReference>
<dbReference type="InterPro" id="IPR023631">
    <property type="entry name" value="Amidase_dom"/>
</dbReference>
<dbReference type="InterPro" id="IPR036928">
    <property type="entry name" value="AS_sf"/>
</dbReference>
<dbReference type="InterPro" id="IPR004412">
    <property type="entry name" value="GatA"/>
</dbReference>
<dbReference type="NCBIfam" id="TIGR00132">
    <property type="entry name" value="gatA"/>
    <property type="match status" value="1"/>
</dbReference>
<dbReference type="PANTHER" id="PTHR11895:SF151">
    <property type="entry name" value="GLUTAMYL-TRNA(GLN) AMIDOTRANSFERASE SUBUNIT A"/>
    <property type="match status" value="1"/>
</dbReference>
<dbReference type="PANTHER" id="PTHR11895">
    <property type="entry name" value="TRANSAMIDASE"/>
    <property type="match status" value="1"/>
</dbReference>
<dbReference type="Pfam" id="PF01425">
    <property type="entry name" value="Amidase"/>
    <property type="match status" value="1"/>
</dbReference>
<dbReference type="SUPFAM" id="SSF75304">
    <property type="entry name" value="Amidase signature (AS) enzymes"/>
    <property type="match status" value="1"/>
</dbReference>
<dbReference type="PROSITE" id="PS00571">
    <property type="entry name" value="AMIDASES"/>
    <property type="match status" value="1"/>
</dbReference>
<protein>
    <recommendedName>
        <fullName evidence="1">Glutamyl-tRNA(Gln) amidotransferase subunit A</fullName>
        <shortName evidence="1">Glu-ADT subunit A</shortName>
        <ecNumber evidence="1">6.3.5.7</ecNumber>
    </recommendedName>
</protein>
<feature type="chain" id="PRO_1000015870" description="Glutamyl-tRNA(Gln) amidotransferase subunit A">
    <location>
        <begin position="1"/>
        <end position="486"/>
    </location>
</feature>
<feature type="active site" description="Charge relay system" evidence="1">
    <location>
        <position position="79"/>
    </location>
</feature>
<feature type="active site" description="Charge relay system" evidence="1">
    <location>
        <position position="154"/>
    </location>
</feature>
<feature type="active site" description="Acyl-ester intermediate" evidence="1">
    <location>
        <position position="178"/>
    </location>
</feature>